<comment type="function">
    <text evidence="5">Defense against chitin-containing fungal pathogens.</text>
</comment>
<comment type="catalytic activity">
    <reaction>
        <text>Random endo-hydrolysis of N-acetyl-beta-D-glucosaminide (1-&gt;4)-beta-linkages in chitin and chitodextrins.</text>
        <dbReference type="EC" id="3.2.1.14"/>
    </reaction>
</comment>
<comment type="subcellular location">
    <subcellularLocation>
        <location evidence="3">Secreted</location>
        <location evidence="3">Cell wall</location>
    </subcellularLocation>
</comment>
<comment type="similarity">
    <text evidence="2">Belongs to the glycosyl hydrolase 19 family. Chitinase class I subfamily.</text>
</comment>
<sequence>TAGFGVFTNIINGGLECGK</sequence>
<keyword id="KW-0119">Carbohydrate metabolism</keyword>
<keyword id="KW-0134">Cell wall</keyword>
<keyword id="KW-0146">Chitin degradation</keyword>
<keyword id="KW-0903">Direct protein sequencing</keyword>
<keyword id="KW-1015">Disulfide bond</keyword>
<keyword id="KW-0326">Glycosidase</keyword>
<keyword id="KW-0378">Hydrolase</keyword>
<keyword id="KW-0611">Plant defense</keyword>
<keyword id="KW-0624">Polysaccharide degradation</keyword>
<keyword id="KW-0964">Secreted</keyword>
<evidence type="ECO:0000250" key="1">
    <source>
        <dbReference type="UniProtKB" id="Q39785"/>
    </source>
</evidence>
<evidence type="ECO:0000255" key="2"/>
<evidence type="ECO:0000269" key="3">
    <source>
    </source>
</evidence>
<evidence type="ECO:0000303" key="4">
    <source>
    </source>
</evidence>
<evidence type="ECO:0000305" key="5"/>
<name>CHI2_TAXBA</name>
<organism>
    <name type="scientific">Taxus baccata</name>
    <name type="common">English yew</name>
    <dbReference type="NCBI Taxonomy" id="25629"/>
    <lineage>
        <taxon>Eukaryota</taxon>
        <taxon>Viridiplantae</taxon>
        <taxon>Streptophyta</taxon>
        <taxon>Embryophyta</taxon>
        <taxon>Tracheophyta</taxon>
        <taxon>Spermatophyta</taxon>
        <taxon>Pinopsida</taxon>
        <taxon>Pinidae</taxon>
        <taxon>Conifers II</taxon>
        <taxon>Cupressales</taxon>
        <taxon>Taxaceae</taxon>
        <taxon>Taxus</taxon>
    </lineage>
</organism>
<protein>
    <recommendedName>
        <fullName>Endochitinase 2</fullName>
        <ecNumber>3.2.1.14</ecNumber>
    </recommendedName>
</protein>
<reference evidence="5" key="1">
    <citation type="journal article" date="2009" name="J. Plant Physiol.">
        <title>Analysis of the soluble cell wall proteome of gymnosperms.</title>
        <authorList>
            <person name="Uzal E.N."/>
            <person name="Gomez-Ros L.V."/>
            <person name="Hernandez J.A."/>
            <person name="Pedreno M.A."/>
            <person name="Cuello J."/>
            <person name="Ros Barcelo A."/>
        </authorList>
    </citation>
    <scope>PROTEIN SEQUENCE</scope>
    <scope>SUBCELLULAR LOCATION</scope>
    <source>
        <strain evidence="3">PC-1008</strain>
        <tissue evidence="3">Callus</tissue>
    </source>
</reference>
<feature type="chain" id="PRO_0000314646" description="Endochitinase 2">
    <location>
        <begin position="1" status="less than"/>
        <end position="19" status="greater than"/>
    </location>
</feature>
<feature type="disulfide bond" evidence="1">
    <location>
        <begin position="17"/>
        <end status="unknown"/>
    </location>
</feature>
<feature type="non-terminal residue" evidence="4">
    <location>
        <position position="1"/>
    </location>
</feature>
<feature type="non-terminal residue" evidence="4">
    <location>
        <position position="19"/>
    </location>
</feature>
<proteinExistence type="evidence at protein level"/>
<accession>P85338</accession>
<dbReference type="EC" id="3.2.1.14"/>
<dbReference type="GO" id="GO:0005576">
    <property type="term" value="C:extracellular region"/>
    <property type="evidence" value="ECO:0007669"/>
    <property type="project" value="UniProtKB-KW"/>
</dbReference>
<dbReference type="GO" id="GO:0008843">
    <property type="term" value="F:endochitinase activity"/>
    <property type="evidence" value="ECO:0007669"/>
    <property type="project" value="UniProtKB-EC"/>
</dbReference>
<dbReference type="GO" id="GO:0006032">
    <property type="term" value="P:chitin catabolic process"/>
    <property type="evidence" value="ECO:0007669"/>
    <property type="project" value="UniProtKB-KW"/>
</dbReference>
<dbReference type="GO" id="GO:0006952">
    <property type="term" value="P:defense response"/>
    <property type="evidence" value="ECO:0007669"/>
    <property type="project" value="UniProtKB-KW"/>
</dbReference>
<dbReference type="GO" id="GO:0000272">
    <property type="term" value="P:polysaccharide catabolic process"/>
    <property type="evidence" value="ECO:0007669"/>
    <property type="project" value="UniProtKB-KW"/>
</dbReference>